<name>QUEC_PARMW</name>
<protein>
    <recommendedName>
        <fullName evidence="1">7-cyano-7-deazaguanine synthase</fullName>
        <ecNumber evidence="1">6.3.4.20</ecNumber>
    </recommendedName>
    <alternativeName>
        <fullName evidence="1">7-cyano-7-carbaguanine synthase</fullName>
    </alternativeName>
    <alternativeName>
        <fullName evidence="1">PreQ(0) synthase</fullName>
    </alternativeName>
    <alternativeName>
        <fullName evidence="1">Queuosine biosynthesis protein QueC</fullName>
    </alternativeName>
</protein>
<proteinExistence type="inferred from homology"/>
<feature type="chain" id="PRO_0000246949" description="7-cyano-7-deazaguanine synthase">
    <location>
        <begin position="1"/>
        <end position="226"/>
    </location>
</feature>
<feature type="binding site" evidence="1">
    <location>
        <begin position="10"/>
        <end position="20"/>
    </location>
    <ligand>
        <name>ATP</name>
        <dbReference type="ChEBI" id="CHEBI:30616"/>
    </ligand>
</feature>
<feature type="binding site" evidence="1">
    <location>
        <position position="191"/>
    </location>
    <ligand>
        <name>Zn(2+)</name>
        <dbReference type="ChEBI" id="CHEBI:29105"/>
    </ligand>
</feature>
<feature type="binding site" evidence="1">
    <location>
        <position position="199"/>
    </location>
    <ligand>
        <name>Zn(2+)</name>
        <dbReference type="ChEBI" id="CHEBI:29105"/>
    </ligand>
</feature>
<feature type="binding site" evidence="1">
    <location>
        <position position="202"/>
    </location>
    <ligand>
        <name>Zn(2+)</name>
        <dbReference type="ChEBI" id="CHEBI:29105"/>
    </ligand>
</feature>
<feature type="binding site" evidence="1">
    <location>
        <position position="205"/>
    </location>
    <ligand>
        <name>Zn(2+)</name>
        <dbReference type="ChEBI" id="CHEBI:29105"/>
    </ligand>
</feature>
<evidence type="ECO:0000255" key="1">
    <source>
        <dbReference type="HAMAP-Rule" id="MF_01633"/>
    </source>
</evidence>
<comment type="function">
    <text evidence="1">Catalyzes the ATP-dependent conversion of 7-carboxy-7-deazaguanine (CDG) to 7-cyano-7-deazaguanine (preQ(0)).</text>
</comment>
<comment type="catalytic activity">
    <reaction evidence="1">
        <text>7-carboxy-7-deazaguanine + NH4(+) + ATP = 7-cyano-7-deazaguanine + ADP + phosphate + H2O + H(+)</text>
        <dbReference type="Rhea" id="RHEA:27982"/>
        <dbReference type="ChEBI" id="CHEBI:15377"/>
        <dbReference type="ChEBI" id="CHEBI:15378"/>
        <dbReference type="ChEBI" id="CHEBI:28938"/>
        <dbReference type="ChEBI" id="CHEBI:30616"/>
        <dbReference type="ChEBI" id="CHEBI:43474"/>
        <dbReference type="ChEBI" id="CHEBI:45075"/>
        <dbReference type="ChEBI" id="CHEBI:61036"/>
        <dbReference type="ChEBI" id="CHEBI:456216"/>
        <dbReference type="EC" id="6.3.4.20"/>
    </reaction>
</comment>
<comment type="cofactor">
    <cofactor evidence="1">
        <name>Zn(2+)</name>
        <dbReference type="ChEBI" id="CHEBI:29105"/>
    </cofactor>
    <text evidence="1">Binds 1 zinc ion per subunit.</text>
</comment>
<comment type="pathway">
    <text evidence="1">Purine metabolism; 7-cyano-7-deazaguanine biosynthesis.</text>
</comment>
<comment type="similarity">
    <text evidence="1">Belongs to the QueC family.</text>
</comment>
<keyword id="KW-0067">ATP-binding</keyword>
<keyword id="KW-0436">Ligase</keyword>
<keyword id="KW-0479">Metal-binding</keyword>
<keyword id="KW-0547">Nucleotide-binding</keyword>
<keyword id="KW-0671">Queuosine biosynthesis</keyword>
<keyword id="KW-0862">Zinc</keyword>
<accession>Q7U3K1</accession>
<sequence>MTQRTSVALLSGGLDSATAAAMALEEGDRVIGLSFDYGQRHHRELEAAAAVASHLGLAEHHCLAVDLAAWGGSALTDDAVTIPTDGVQEGVIPPTYVPGRNTVFIAVGLSLAEARGAERLVLGVNAVDYSGYPDCRPDYLNVFQQLANLASKAGREGHGTELWAPLVEWSKTRIVEEAFRLNVPIQSTWSCYSGGTTPCGICDSCRIRDAALREAGRPDLCSNASA</sequence>
<organism>
    <name type="scientific">Parasynechococcus marenigrum (strain WH8102)</name>
    <dbReference type="NCBI Taxonomy" id="84588"/>
    <lineage>
        <taxon>Bacteria</taxon>
        <taxon>Bacillati</taxon>
        <taxon>Cyanobacteriota</taxon>
        <taxon>Cyanophyceae</taxon>
        <taxon>Synechococcales</taxon>
        <taxon>Prochlorococcaceae</taxon>
        <taxon>Parasynechococcus</taxon>
        <taxon>Parasynechococcus marenigrum</taxon>
    </lineage>
</organism>
<dbReference type="EC" id="6.3.4.20" evidence="1"/>
<dbReference type="EMBL" id="BX569695">
    <property type="protein sequence ID" value="CAE08946.1"/>
    <property type="molecule type" value="Genomic_DNA"/>
</dbReference>
<dbReference type="RefSeq" id="WP_011129284.1">
    <property type="nucleotide sequence ID" value="NC_005070.1"/>
</dbReference>
<dbReference type="SMR" id="Q7U3K1"/>
<dbReference type="STRING" id="84588.SYNW2431"/>
<dbReference type="KEGG" id="syw:SYNW2431"/>
<dbReference type="eggNOG" id="COG0603">
    <property type="taxonomic scope" value="Bacteria"/>
</dbReference>
<dbReference type="HOGENOM" id="CLU_081854_1_0_3"/>
<dbReference type="UniPathway" id="UPA00391"/>
<dbReference type="Proteomes" id="UP000001422">
    <property type="component" value="Chromosome"/>
</dbReference>
<dbReference type="GO" id="GO:0005524">
    <property type="term" value="F:ATP binding"/>
    <property type="evidence" value="ECO:0007669"/>
    <property type="project" value="UniProtKB-UniRule"/>
</dbReference>
<dbReference type="GO" id="GO:0016879">
    <property type="term" value="F:ligase activity, forming carbon-nitrogen bonds"/>
    <property type="evidence" value="ECO:0007669"/>
    <property type="project" value="UniProtKB-UniRule"/>
</dbReference>
<dbReference type="GO" id="GO:0008270">
    <property type="term" value="F:zinc ion binding"/>
    <property type="evidence" value="ECO:0007669"/>
    <property type="project" value="UniProtKB-UniRule"/>
</dbReference>
<dbReference type="GO" id="GO:0008616">
    <property type="term" value="P:queuosine biosynthetic process"/>
    <property type="evidence" value="ECO:0007669"/>
    <property type="project" value="UniProtKB-UniRule"/>
</dbReference>
<dbReference type="CDD" id="cd01995">
    <property type="entry name" value="QueC-like"/>
    <property type="match status" value="1"/>
</dbReference>
<dbReference type="Gene3D" id="3.40.50.620">
    <property type="entry name" value="HUPs"/>
    <property type="match status" value="1"/>
</dbReference>
<dbReference type="HAMAP" id="MF_01633">
    <property type="entry name" value="QueC"/>
    <property type="match status" value="1"/>
</dbReference>
<dbReference type="InterPro" id="IPR018317">
    <property type="entry name" value="QueC"/>
</dbReference>
<dbReference type="InterPro" id="IPR014729">
    <property type="entry name" value="Rossmann-like_a/b/a_fold"/>
</dbReference>
<dbReference type="NCBIfam" id="TIGR00364">
    <property type="entry name" value="7-cyano-7-deazaguanine synthase QueC"/>
    <property type="match status" value="1"/>
</dbReference>
<dbReference type="PANTHER" id="PTHR42914">
    <property type="entry name" value="7-CYANO-7-DEAZAGUANINE SYNTHASE"/>
    <property type="match status" value="1"/>
</dbReference>
<dbReference type="PANTHER" id="PTHR42914:SF1">
    <property type="entry name" value="7-CYANO-7-DEAZAGUANINE SYNTHASE"/>
    <property type="match status" value="1"/>
</dbReference>
<dbReference type="Pfam" id="PF06508">
    <property type="entry name" value="QueC"/>
    <property type="match status" value="1"/>
</dbReference>
<dbReference type="PIRSF" id="PIRSF006293">
    <property type="entry name" value="ExsB"/>
    <property type="match status" value="1"/>
</dbReference>
<dbReference type="SUPFAM" id="SSF52402">
    <property type="entry name" value="Adenine nucleotide alpha hydrolases-like"/>
    <property type="match status" value="1"/>
</dbReference>
<reference key="1">
    <citation type="journal article" date="2003" name="Nature">
        <title>The genome of a motile marine Synechococcus.</title>
        <authorList>
            <person name="Palenik B."/>
            <person name="Brahamsha B."/>
            <person name="Larimer F.W."/>
            <person name="Land M.L."/>
            <person name="Hauser L."/>
            <person name="Chain P."/>
            <person name="Lamerdin J.E."/>
            <person name="Regala W."/>
            <person name="Allen E.E."/>
            <person name="McCarren J."/>
            <person name="Paulsen I.T."/>
            <person name="Dufresne A."/>
            <person name="Partensky F."/>
            <person name="Webb E.A."/>
            <person name="Waterbury J."/>
        </authorList>
    </citation>
    <scope>NUCLEOTIDE SEQUENCE [LARGE SCALE GENOMIC DNA]</scope>
    <source>
        <strain>WH8102</strain>
    </source>
</reference>
<gene>
    <name evidence="1" type="primary">queC</name>
    <name type="ordered locus">SYNW2431</name>
</gene>